<comment type="catalytic activity">
    <reaction>
        <text>L-seryl-[protein] + ATP = O-phospho-L-seryl-[protein] + ADP + H(+)</text>
        <dbReference type="Rhea" id="RHEA:17989"/>
        <dbReference type="Rhea" id="RHEA-COMP:9863"/>
        <dbReference type="Rhea" id="RHEA-COMP:11604"/>
        <dbReference type="ChEBI" id="CHEBI:15378"/>
        <dbReference type="ChEBI" id="CHEBI:29999"/>
        <dbReference type="ChEBI" id="CHEBI:30616"/>
        <dbReference type="ChEBI" id="CHEBI:83421"/>
        <dbReference type="ChEBI" id="CHEBI:456216"/>
        <dbReference type="EC" id="2.7.11.1"/>
    </reaction>
</comment>
<comment type="catalytic activity">
    <reaction>
        <text>L-threonyl-[protein] + ATP = O-phospho-L-threonyl-[protein] + ADP + H(+)</text>
        <dbReference type="Rhea" id="RHEA:46608"/>
        <dbReference type="Rhea" id="RHEA-COMP:11060"/>
        <dbReference type="Rhea" id="RHEA-COMP:11605"/>
        <dbReference type="ChEBI" id="CHEBI:15378"/>
        <dbReference type="ChEBI" id="CHEBI:30013"/>
        <dbReference type="ChEBI" id="CHEBI:30616"/>
        <dbReference type="ChEBI" id="CHEBI:61977"/>
        <dbReference type="ChEBI" id="CHEBI:456216"/>
        <dbReference type="EC" id="2.7.11.1"/>
    </reaction>
</comment>
<comment type="subcellular location">
    <subcellularLocation>
        <location evidence="5">Cytoplasm</location>
    </subcellularLocation>
</comment>
<comment type="similarity">
    <text evidence="6">Belongs to the protein kinase superfamily. AGC Ser/Thr protein kinase family.</text>
</comment>
<name>NDRB_DICDI</name>
<feature type="chain" id="PRO_0000358888" description="Probable serine/threonine-protein kinase ndrB">
    <location>
        <begin position="1"/>
        <end position="542"/>
    </location>
</feature>
<feature type="domain" description="Protein kinase" evidence="1">
    <location>
        <begin position="130"/>
        <end position="437"/>
    </location>
</feature>
<feature type="domain" description="AGC-kinase C-terminal" evidence="2">
    <location>
        <begin position="438"/>
        <end position="510"/>
    </location>
</feature>
<feature type="region of interest" description="Disordered" evidence="4">
    <location>
        <begin position="1"/>
        <end position="52"/>
    </location>
</feature>
<feature type="region of interest" description="Disordered" evidence="4">
    <location>
        <begin position="452"/>
        <end position="486"/>
    </location>
</feature>
<feature type="compositionally biased region" description="Low complexity" evidence="4">
    <location>
        <begin position="9"/>
        <end position="18"/>
    </location>
</feature>
<feature type="compositionally biased region" description="Acidic residues" evidence="4">
    <location>
        <begin position="19"/>
        <end position="51"/>
    </location>
</feature>
<feature type="compositionally biased region" description="Polar residues" evidence="4">
    <location>
        <begin position="455"/>
        <end position="465"/>
    </location>
</feature>
<feature type="active site" description="Proton acceptor" evidence="1 3">
    <location>
        <position position="258"/>
    </location>
</feature>
<feature type="binding site" evidence="1">
    <location>
        <begin position="136"/>
        <end position="144"/>
    </location>
    <ligand>
        <name>ATP</name>
        <dbReference type="ChEBI" id="CHEBI:30616"/>
    </ligand>
</feature>
<feature type="binding site" evidence="1">
    <location>
        <position position="159"/>
    </location>
    <ligand>
        <name>ATP</name>
        <dbReference type="ChEBI" id="CHEBI:30616"/>
    </ligand>
</feature>
<keyword id="KW-0067">ATP-binding</keyword>
<keyword id="KW-0963">Cytoplasm</keyword>
<keyword id="KW-0418">Kinase</keyword>
<keyword id="KW-0547">Nucleotide-binding</keyword>
<keyword id="KW-0597">Phosphoprotein</keyword>
<keyword id="KW-1185">Reference proteome</keyword>
<keyword id="KW-0723">Serine/threonine-protein kinase</keyword>
<keyword id="KW-0808">Transferase</keyword>
<accession>Q54IH8</accession>
<gene>
    <name type="primary">ndrB</name>
    <name type="ORF">DDB_G0288753</name>
</gene>
<sequence length="542" mass="63595">MNVERKLESLSLQQQQQEEQQDESEQPNQGVEDEEEEEYDEEEYEEEEEDINFSKETLEAAMATKVSIEQYYTSLFKSLKERDDRRCFLEKKMEELNLREEQKSVKRRELDKKETEYIKSRRIRLTGHSFESIRIIGRGAFGEVRLVKMKKNNKFFAMKKLDKSKMIEKHQTIHVRSERDILADSNNIHGSNPWIVSLYYSFQDANFLYLIMEYVPGGDMMTQLIKYDTFTEDATRFYIAETVLALHSIHKLSYIHRDIKPDNLLIDQKGHIKVSDFGLCTGLQTNRVPTLAEIYKKYEGDNNIREEDQTPQSRSARFDSWKRQRRVLAYSNVGTPDYTAPEVLMKDGYSAECDWWSVGVIMFEMLVGYPPFCSESIRETYHKIMNWKQTLPKIMEEAKAEVNLSPEAQDLIERFLTDPMTRIGFNGVEEIQSHPFFKGVDWRRLRETRPPIIPQLSSPTDTSNFDHYEEEQQPEPMQPVQSKSRRKITSFDIPFIGYTYRNFDAMRDAFGSVNSRDAFGSINSREAFGSINNRDSLQGANM</sequence>
<dbReference type="EC" id="2.7.11.1"/>
<dbReference type="EMBL" id="AAFI02000122">
    <property type="protein sequence ID" value="EAL63069.1"/>
    <property type="molecule type" value="Genomic_DNA"/>
</dbReference>
<dbReference type="RefSeq" id="XP_636570.1">
    <property type="nucleotide sequence ID" value="XM_631478.1"/>
</dbReference>
<dbReference type="SMR" id="Q54IH8"/>
<dbReference type="FunCoup" id="Q54IH8">
    <property type="interactions" value="61"/>
</dbReference>
<dbReference type="STRING" id="44689.Q54IH8"/>
<dbReference type="PaxDb" id="44689-DDB0219947"/>
<dbReference type="EnsemblProtists" id="EAL63069">
    <property type="protein sequence ID" value="EAL63069"/>
    <property type="gene ID" value="DDB_G0288753"/>
</dbReference>
<dbReference type="GeneID" id="8626784"/>
<dbReference type="KEGG" id="ddi:DDB_G0288753"/>
<dbReference type="dictyBase" id="DDB_G0288753">
    <property type="gene designation" value="ndrB"/>
</dbReference>
<dbReference type="VEuPathDB" id="AmoebaDB:DDB_G0288753"/>
<dbReference type="eggNOG" id="KOG0605">
    <property type="taxonomic scope" value="Eukaryota"/>
</dbReference>
<dbReference type="HOGENOM" id="CLU_000288_67_0_1"/>
<dbReference type="InParanoid" id="Q54IH8"/>
<dbReference type="OMA" id="MSTCRKA"/>
<dbReference type="PhylomeDB" id="Q54IH8"/>
<dbReference type="Reactome" id="R-DDI-9013418">
    <property type="pathway name" value="RHOBTB2 GTPase cycle"/>
</dbReference>
<dbReference type="Reactome" id="R-DDI-9013422">
    <property type="pathway name" value="RHOBTB1 GTPase cycle"/>
</dbReference>
<dbReference type="PRO" id="PR:Q54IH8"/>
<dbReference type="Proteomes" id="UP000002195">
    <property type="component" value="Chromosome 5"/>
</dbReference>
<dbReference type="GO" id="GO:0005737">
    <property type="term" value="C:cytoplasm"/>
    <property type="evidence" value="ECO:0007669"/>
    <property type="project" value="UniProtKB-SubCell"/>
</dbReference>
<dbReference type="GO" id="GO:0005524">
    <property type="term" value="F:ATP binding"/>
    <property type="evidence" value="ECO:0007669"/>
    <property type="project" value="UniProtKB-KW"/>
</dbReference>
<dbReference type="GO" id="GO:0106310">
    <property type="term" value="F:protein serine kinase activity"/>
    <property type="evidence" value="ECO:0007669"/>
    <property type="project" value="RHEA"/>
</dbReference>
<dbReference type="GO" id="GO:0004674">
    <property type="term" value="F:protein serine/threonine kinase activity"/>
    <property type="evidence" value="ECO:0000250"/>
    <property type="project" value="dictyBase"/>
</dbReference>
<dbReference type="GO" id="GO:0035556">
    <property type="term" value="P:intracellular signal transduction"/>
    <property type="evidence" value="ECO:0000318"/>
    <property type="project" value="GO_Central"/>
</dbReference>
<dbReference type="CDD" id="cd21742">
    <property type="entry name" value="MobB_NDR_LATS-like"/>
    <property type="match status" value="1"/>
</dbReference>
<dbReference type="CDD" id="cd05599">
    <property type="entry name" value="STKc_NDR_like"/>
    <property type="match status" value="1"/>
</dbReference>
<dbReference type="FunFam" id="1.10.510.10:FF:000057">
    <property type="entry name" value="Non-specific serine/threonine protein kinase"/>
    <property type="match status" value="1"/>
</dbReference>
<dbReference type="FunFam" id="1.10.510.10:FF:000086">
    <property type="entry name" value="Non-specific serine/threonine protein kinase"/>
    <property type="match status" value="1"/>
</dbReference>
<dbReference type="FunFam" id="3.30.200.20:FF:000192">
    <property type="entry name" value="Serine/threonine-protein kinase cot-1"/>
    <property type="match status" value="1"/>
</dbReference>
<dbReference type="Gene3D" id="3.30.200.20">
    <property type="entry name" value="Phosphorylase Kinase, domain 1"/>
    <property type="match status" value="2"/>
</dbReference>
<dbReference type="Gene3D" id="1.10.510.10">
    <property type="entry name" value="Transferase(Phosphotransferase) domain 1"/>
    <property type="match status" value="2"/>
</dbReference>
<dbReference type="InterPro" id="IPR000961">
    <property type="entry name" value="AGC-kinase_C"/>
</dbReference>
<dbReference type="InterPro" id="IPR011009">
    <property type="entry name" value="Kinase-like_dom_sf"/>
</dbReference>
<dbReference type="InterPro" id="IPR017892">
    <property type="entry name" value="Pkinase_C"/>
</dbReference>
<dbReference type="InterPro" id="IPR000719">
    <property type="entry name" value="Prot_kinase_dom"/>
</dbReference>
<dbReference type="InterPro" id="IPR017441">
    <property type="entry name" value="Protein_kinase_ATP_BS"/>
</dbReference>
<dbReference type="InterPro" id="IPR050839">
    <property type="entry name" value="Rho-assoc_Ser/Thr_Kinase"/>
</dbReference>
<dbReference type="InterPro" id="IPR008271">
    <property type="entry name" value="Ser/Thr_kinase_AS"/>
</dbReference>
<dbReference type="PANTHER" id="PTHR22988:SF76">
    <property type="entry name" value="CHROMOSOME UNDETERMINED SCAFFOLD_135, WHOLE GENOME SHOTGUN SEQUENCE"/>
    <property type="match status" value="1"/>
</dbReference>
<dbReference type="PANTHER" id="PTHR22988">
    <property type="entry name" value="MYOTONIC DYSTROPHY S/T KINASE-RELATED"/>
    <property type="match status" value="1"/>
</dbReference>
<dbReference type="Pfam" id="PF00069">
    <property type="entry name" value="Pkinase"/>
    <property type="match status" value="1"/>
</dbReference>
<dbReference type="Pfam" id="PF00433">
    <property type="entry name" value="Pkinase_C"/>
    <property type="match status" value="1"/>
</dbReference>
<dbReference type="SMART" id="SM00133">
    <property type="entry name" value="S_TK_X"/>
    <property type="match status" value="1"/>
</dbReference>
<dbReference type="SMART" id="SM00220">
    <property type="entry name" value="S_TKc"/>
    <property type="match status" value="1"/>
</dbReference>
<dbReference type="SUPFAM" id="SSF56112">
    <property type="entry name" value="Protein kinase-like (PK-like)"/>
    <property type="match status" value="1"/>
</dbReference>
<dbReference type="PROSITE" id="PS51285">
    <property type="entry name" value="AGC_KINASE_CTER"/>
    <property type="match status" value="1"/>
</dbReference>
<dbReference type="PROSITE" id="PS00107">
    <property type="entry name" value="PROTEIN_KINASE_ATP"/>
    <property type="match status" value="1"/>
</dbReference>
<dbReference type="PROSITE" id="PS50011">
    <property type="entry name" value="PROTEIN_KINASE_DOM"/>
    <property type="match status" value="1"/>
</dbReference>
<dbReference type="PROSITE" id="PS00108">
    <property type="entry name" value="PROTEIN_KINASE_ST"/>
    <property type="match status" value="1"/>
</dbReference>
<reference key="1">
    <citation type="journal article" date="2005" name="Nature">
        <title>The genome of the social amoeba Dictyostelium discoideum.</title>
        <authorList>
            <person name="Eichinger L."/>
            <person name="Pachebat J.A."/>
            <person name="Gloeckner G."/>
            <person name="Rajandream M.A."/>
            <person name="Sucgang R."/>
            <person name="Berriman M."/>
            <person name="Song J."/>
            <person name="Olsen R."/>
            <person name="Szafranski K."/>
            <person name="Xu Q."/>
            <person name="Tunggal B."/>
            <person name="Kummerfeld S."/>
            <person name="Madera M."/>
            <person name="Konfortov B.A."/>
            <person name="Rivero F."/>
            <person name="Bankier A.T."/>
            <person name="Lehmann R."/>
            <person name="Hamlin N."/>
            <person name="Davies R."/>
            <person name="Gaudet P."/>
            <person name="Fey P."/>
            <person name="Pilcher K."/>
            <person name="Chen G."/>
            <person name="Saunders D."/>
            <person name="Sodergren E.J."/>
            <person name="Davis P."/>
            <person name="Kerhornou A."/>
            <person name="Nie X."/>
            <person name="Hall N."/>
            <person name="Anjard C."/>
            <person name="Hemphill L."/>
            <person name="Bason N."/>
            <person name="Farbrother P."/>
            <person name="Desany B."/>
            <person name="Just E."/>
            <person name="Morio T."/>
            <person name="Rost R."/>
            <person name="Churcher C.M."/>
            <person name="Cooper J."/>
            <person name="Haydock S."/>
            <person name="van Driessche N."/>
            <person name="Cronin A."/>
            <person name="Goodhead I."/>
            <person name="Muzny D.M."/>
            <person name="Mourier T."/>
            <person name="Pain A."/>
            <person name="Lu M."/>
            <person name="Harper D."/>
            <person name="Lindsay R."/>
            <person name="Hauser H."/>
            <person name="James K.D."/>
            <person name="Quiles M."/>
            <person name="Madan Babu M."/>
            <person name="Saito T."/>
            <person name="Buchrieser C."/>
            <person name="Wardroper A."/>
            <person name="Felder M."/>
            <person name="Thangavelu M."/>
            <person name="Johnson D."/>
            <person name="Knights A."/>
            <person name="Loulseged H."/>
            <person name="Mungall K.L."/>
            <person name="Oliver K."/>
            <person name="Price C."/>
            <person name="Quail M.A."/>
            <person name="Urushihara H."/>
            <person name="Hernandez J."/>
            <person name="Rabbinowitsch E."/>
            <person name="Steffen D."/>
            <person name="Sanders M."/>
            <person name="Ma J."/>
            <person name="Kohara Y."/>
            <person name="Sharp S."/>
            <person name="Simmonds M.N."/>
            <person name="Spiegler S."/>
            <person name="Tivey A."/>
            <person name="Sugano S."/>
            <person name="White B."/>
            <person name="Walker D."/>
            <person name="Woodward J.R."/>
            <person name="Winckler T."/>
            <person name="Tanaka Y."/>
            <person name="Shaulsky G."/>
            <person name="Schleicher M."/>
            <person name="Weinstock G.M."/>
            <person name="Rosenthal A."/>
            <person name="Cox E.C."/>
            <person name="Chisholm R.L."/>
            <person name="Gibbs R.A."/>
            <person name="Loomis W.F."/>
            <person name="Platzer M."/>
            <person name="Kay R.R."/>
            <person name="Williams J.G."/>
            <person name="Dear P.H."/>
            <person name="Noegel A.A."/>
            <person name="Barrell B.G."/>
            <person name="Kuspa A."/>
        </authorList>
    </citation>
    <scope>NUCLEOTIDE SEQUENCE [LARGE SCALE GENOMIC DNA]</scope>
    <source>
        <strain>AX4</strain>
    </source>
</reference>
<reference key="2">
    <citation type="journal article" date="2007" name="Eur. J. Cell Biol. Suppl.">
        <title>Exploring the role of NDR kinases in Dictyostelium discoideum cytokenesis.</title>
        <authorList>
            <person name="Kastner P.M."/>
            <person name="Samereier M."/>
            <person name="Schleicher M."/>
            <person name="Mueller-Taubenberger A."/>
        </authorList>
    </citation>
    <scope>SUBCELLULAR LOCATION</scope>
</reference>
<evidence type="ECO:0000255" key="1">
    <source>
        <dbReference type="PROSITE-ProRule" id="PRU00159"/>
    </source>
</evidence>
<evidence type="ECO:0000255" key="2">
    <source>
        <dbReference type="PROSITE-ProRule" id="PRU00618"/>
    </source>
</evidence>
<evidence type="ECO:0000255" key="3">
    <source>
        <dbReference type="PROSITE-ProRule" id="PRU10027"/>
    </source>
</evidence>
<evidence type="ECO:0000256" key="4">
    <source>
        <dbReference type="SAM" id="MobiDB-lite"/>
    </source>
</evidence>
<evidence type="ECO:0000269" key="5">
    <source ref="2"/>
</evidence>
<evidence type="ECO:0000305" key="6"/>
<protein>
    <recommendedName>
        <fullName>Probable serine/threonine-protein kinase ndrB</fullName>
        <ecNumber>2.7.11.1</ecNumber>
    </recommendedName>
    <alternativeName>
        <fullName>Nuclear DBF2-related kinase B</fullName>
    </alternativeName>
</protein>
<proteinExistence type="inferred from homology"/>
<organism>
    <name type="scientific">Dictyostelium discoideum</name>
    <name type="common">Social amoeba</name>
    <dbReference type="NCBI Taxonomy" id="44689"/>
    <lineage>
        <taxon>Eukaryota</taxon>
        <taxon>Amoebozoa</taxon>
        <taxon>Evosea</taxon>
        <taxon>Eumycetozoa</taxon>
        <taxon>Dictyostelia</taxon>
        <taxon>Dictyosteliales</taxon>
        <taxon>Dictyosteliaceae</taxon>
        <taxon>Dictyostelium</taxon>
    </lineage>
</organism>